<sequence length="100" mass="10975">MQPRVLLVAALLVLLASARALEAEDPSLLDLMQGYMQHATKTAQDTLTSVQESQVAQRARDWMTDGFSSLKDYWSTFKGKFSGFWDSASEAQTTPASDAS</sequence>
<organism>
    <name type="scientific">Mirounga angustirostris</name>
    <name type="common">Northern elephant seal</name>
    <name type="synonym">Macrorhinus angustirostris</name>
    <dbReference type="NCBI Taxonomy" id="9716"/>
    <lineage>
        <taxon>Eukaryota</taxon>
        <taxon>Metazoa</taxon>
        <taxon>Chordata</taxon>
        <taxon>Craniata</taxon>
        <taxon>Vertebrata</taxon>
        <taxon>Euteleostomi</taxon>
        <taxon>Mammalia</taxon>
        <taxon>Eutheria</taxon>
        <taxon>Laurasiatheria</taxon>
        <taxon>Carnivora</taxon>
        <taxon>Caniformia</taxon>
        <taxon>Pinnipedia</taxon>
        <taxon>Phocidae</taxon>
        <taxon>Monachinae</taxon>
        <taxon>Miroungini</taxon>
        <taxon>Mirounga</taxon>
    </lineage>
</organism>
<feature type="signal peptide" evidence="3">
    <location>
        <begin position="1"/>
        <end position="23"/>
    </location>
</feature>
<feature type="chain" id="PRO_0000448771" description="Apolipoprotein C-III">
    <location>
        <begin position="24"/>
        <end position="100"/>
    </location>
</feature>
<feature type="region of interest" description="Lipid-binding" evidence="1">
    <location>
        <begin position="68"/>
        <end position="100"/>
    </location>
</feature>
<feature type="site" description="May interact with the LDL receptor" evidence="2">
    <location>
        <position position="41"/>
    </location>
</feature>
<feature type="glycosylation site" description="O-linked (GalNAc...) threonine" evidence="2">
    <location>
        <position position="94"/>
    </location>
</feature>
<proteinExistence type="inferred from homology"/>
<protein>
    <recommendedName>
        <fullName>Apolipoprotein C-III</fullName>
        <shortName>Apo-CIII</shortName>
        <shortName>ApoC-III</shortName>
    </recommendedName>
    <alternativeName>
        <fullName>Apolipoprotein C3</fullName>
    </alternativeName>
</protein>
<name>APOC3_MIRAN</name>
<evidence type="ECO:0000250" key="1"/>
<evidence type="ECO:0000250" key="2">
    <source>
        <dbReference type="UniProtKB" id="P02656"/>
    </source>
</evidence>
<evidence type="ECO:0000255" key="3"/>
<evidence type="ECO:0000305" key="4"/>
<gene>
    <name type="primary">APOC3</name>
</gene>
<comment type="function">
    <text evidence="2">Component of triglyceride-rich very low density lipoproteins (VLDL) and high density lipoproteins (HDL) in plasma. Plays a multifaceted role in triglyceride homeostasis. Intracellularly, promotes hepatic very low density lipoprotein 1 (VLDL1) assembly and secretion; extracellularly, attenuates hydrolysis and clearance of triglyceride-rich lipoproteins (TRLs). Impairs the lipolysis of TRLs by inhibiting lipoprotein lipase and the hepatic uptake of TRLs by remnant receptors. Formed of several curved helices connected via semiflexible hinges, so that it can wrap tightly around the curved micelle surface and easily adapt to the different diameters of its natural binding partners.</text>
</comment>
<comment type="subcellular location">
    <subcellularLocation>
        <location evidence="2">Secreted</location>
    </subcellularLocation>
</comment>
<comment type="PTM">
    <text evidence="2">The most abundant glycoforms are characterized by an O-linked disaccharide galactose linked to N-acetylgalactosamine (Gal-GalNAc), further modified with up to 3 sialic acid residues. Less abundant glycoforms are characterized by more complex and fucosylated glycan moieties. O-glycosylated on Thr-94 with a core 1 or possibly core 8 glycan.</text>
</comment>
<comment type="similarity">
    <text evidence="4">Belongs to the apolipoprotein C3 family.</text>
</comment>
<dbReference type="EMBL" id="PITE01000000">
    <property type="status" value="NOT_ANNOTATED_CDS"/>
    <property type="molecule type" value="Genomic_DNA"/>
</dbReference>
<dbReference type="RefSeq" id="XP_045748846.1">
    <property type="nucleotide sequence ID" value="XM_045892890.2"/>
</dbReference>
<dbReference type="SMR" id="P0DTS4"/>
<dbReference type="GlyCosmos" id="P0DTS4">
    <property type="glycosylation" value="1 site, No reported glycans"/>
</dbReference>
<dbReference type="GeneID" id="123856773"/>
<dbReference type="GO" id="GO:0042627">
    <property type="term" value="C:chylomicron"/>
    <property type="evidence" value="ECO:0007669"/>
    <property type="project" value="UniProtKB-KW"/>
</dbReference>
<dbReference type="GO" id="GO:0034363">
    <property type="term" value="C:intermediate-density lipoprotein particle"/>
    <property type="evidence" value="ECO:0007669"/>
    <property type="project" value="TreeGrafter"/>
</dbReference>
<dbReference type="GO" id="GO:0034366">
    <property type="term" value="C:spherical high-density lipoprotein particle"/>
    <property type="evidence" value="ECO:0007669"/>
    <property type="project" value="TreeGrafter"/>
</dbReference>
<dbReference type="GO" id="GO:0034361">
    <property type="term" value="C:very-low-density lipoprotein particle"/>
    <property type="evidence" value="ECO:0007669"/>
    <property type="project" value="UniProtKB-KW"/>
</dbReference>
<dbReference type="GO" id="GO:0070653">
    <property type="term" value="F:high-density lipoprotein particle receptor binding"/>
    <property type="evidence" value="ECO:0007669"/>
    <property type="project" value="TreeGrafter"/>
</dbReference>
<dbReference type="GO" id="GO:0055102">
    <property type="term" value="F:lipase inhibitor activity"/>
    <property type="evidence" value="ECO:0007669"/>
    <property type="project" value="TreeGrafter"/>
</dbReference>
<dbReference type="GO" id="GO:0005543">
    <property type="term" value="F:phospholipid binding"/>
    <property type="evidence" value="ECO:0007669"/>
    <property type="project" value="TreeGrafter"/>
</dbReference>
<dbReference type="GO" id="GO:0042632">
    <property type="term" value="P:cholesterol homeostasis"/>
    <property type="evidence" value="ECO:0007669"/>
    <property type="project" value="TreeGrafter"/>
</dbReference>
<dbReference type="GO" id="GO:0016042">
    <property type="term" value="P:lipid catabolic process"/>
    <property type="evidence" value="ECO:0007669"/>
    <property type="project" value="UniProtKB-KW"/>
</dbReference>
<dbReference type="GO" id="GO:0006869">
    <property type="term" value="P:lipid transport"/>
    <property type="evidence" value="ECO:0007669"/>
    <property type="project" value="UniProtKB-KW"/>
</dbReference>
<dbReference type="GO" id="GO:0042157">
    <property type="term" value="P:lipoprotein metabolic process"/>
    <property type="evidence" value="ECO:0007669"/>
    <property type="project" value="InterPro"/>
</dbReference>
<dbReference type="GO" id="GO:0010987">
    <property type="term" value="P:negative regulation of high-density lipoprotein particle clearance"/>
    <property type="evidence" value="ECO:0007669"/>
    <property type="project" value="TreeGrafter"/>
</dbReference>
<dbReference type="GO" id="GO:0010989">
    <property type="term" value="P:negative regulation of low-density lipoprotein particle clearance"/>
    <property type="evidence" value="ECO:0007669"/>
    <property type="project" value="TreeGrafter"/>
</dbReference>
<dbReference type="GO" id="GO:0010897">
    <property type="term" value="P:negative regulation of triglyceride catabolic process"/>
    <property type="evidence" value="ECO:0007669"/>
    <property type="project" value="TreeGrafter"/>
</dbReference>
<dbReference type="GO" id="GO:0010916">
    <property type="term" value="P:negative regulation of very-low-density lipoprotein particle clearance"/>
    <property type="evidence" value="ECO:0007669"/>
    <property type="project" value="TreeGrafter"/>
</dbReference>
<dbReference type="GO" id="GO:0070328">
    <property type="term" value="P:triglyceride homeostasis"/>
    <property type="evidence" value="ECO:0007669"/>
    <property type="project" value="TreeGrafter"/>
</dbReference>
<dbReference type="Gene3D" id="6.10.90.10">
    <property type="entry name" value="Apolipoprotein CIII"/>
    <property type="match status" value="1"/>
</dbReference>
<dbReference type="InterPro" id="IPR008403">
    <property type="entry name" value="Apo-CIII"/>
</dbReference>
<dbReference type="InterPro" id="IPR038195">
    <property type="entry name" value="Apo_CIII_sf"/>
</dbReference>
<dbReference type="PANTHER" id="PTHR14225">
    <property type="entry name" value="APOLIPOPROTEIN C-III"/>
    <property type="match status" value="1"/>
</dbReference>
<dbReference type="PANTHER" id="PTHR14225:SF0">
    <property type="entry name" value="APOLIPOPROTEIN C-III"/>
    <property type="match status" value="1"/>
</dbReference>
<dbReference type="Pfam" id="PF05778">
    <property type="entry name" value="Apo-CIII"/>
    <property type="match status" value="1"/>
</dbReference>
<accession>P0DTS4</accession>
<reference key="1">
    <citation type="submission" date="2017-11" db="EMBL/GenBank/DDBJ databases">
        <title>The 200 mammals project: sequencing genomes by a novel cost-effective method, yielding a high resolution annotation of the human genome.</title>
        <authorList>
            <person name="Johnson J."/>
            <person name="Muren E."/>
            <person name="Swofford R."/>
            <person name="Turner-Maier J."/>
            <person name="Marinescu V.D."/>
            <person name="Genereux D.P."/>
            <person name="Alfoldi J."/>
            <person name="Birren B."/>
            <person name="Karlsson E.K."/>
            <person name="Lindblad-Toh K."/>
        </authorList>
    </citation>
    <scope>NUCLEOTIDE SEQUENCE [LARGE SCALE GENOMIC DNA]</scope>
</reference>
<reference key="2">
    <citation type="unpublished observations" date="2019-10">
        <authorList>
            <person name="Puppione D.L."/>
        </authorList>
    </citation>
    <scope>IDENTIFICATION</scope>
</reference>
<keyword id="KW-0162">Chylomicron</keyword>
<keyword id="KW-0325">Glycoprotein</keyword>
<keyword id="KW-0442">Lipid degradation</keyword>
<keyword id="KW-0443">Lipid metabolism</keyword>
<keyword id="KW-0445">Lipid transport</keyword>
<keyword id="KW-0964">Secreted</keyword>
<keyword id="KW-0730">Sialic acid</keyword>
<keyword id="KW-0732">Signal</keyword>
<keyword id="KW-0813">Transport</keyword>
<keyword id="KW-0850">VLDL</keyword>